<protein>
    <recommendedName>
        <fullName evidence="1">UPF0235 protein Sputw3181_1321</fullName>
    </recommendedName>
</protein>
<sequence>MSAVVQQQGDLLLNLYIQPKASRDQIVGLHGDELKVAITAPPIDGKANAHLSKYLAKAFKVPKSDVYIIKGELGRHKQIRIVTPKLIPPEVSELLE</sequence>
<gene>
    <name type="ordered locus">Sputw3181_1321</name>
</gene>
<organism>
    <name type="scientific">Shewanella sp. (strain W3-18-1)</name>
    <dbReference type="NCBI Taxonomy" id="351745"/>
    <lineage>
        <taxon>Bacteria</taxon>
        <taxon>Pseudomonadati</taxon>
        <taxon>Pseudomonadota</taxon>
        <taxon>Gammaproteobacteria</taxon>
        <taxon>Alteromonadales</taxon>
        <taxon>Shewanellaceae</taxon>
        <taxon>Shewanella</taxon>
    </lineage>
</organism>
<accession>A1RHL9</accession>
<evidence type="ECO:0000255" key="1">
    <source>
        <dbReference type="HAMAP-Rule" id="MF_00634"/>
    </source>
</evidence>
<comment type="similarity">
    <text evidence="1">Belongs to the UPF0235 family.</text>
</comment>
<dbReference type="EMBL" id="CP000503">
    <property type="protein sequence ID" value="ABM24164.1"/>
    <property type="molecule type" value="Genomic_DNA"/>
</dbReference>
<dbReference type="SMR" id="A1RHL9"/>
<dbReference type="KEGG" id="shw:Sputw3181_1321"/>
<dbReference type="HOGENOM" id="CLU_130694_5_0_6"/>
<dbReference type="Proteomes" id="UP000002597">
    <property type="component" value="Chromosome"/>
</dbReference>
<dbReference type="GO" id="GO:0005737">
    <property type="term" value="C:cytoplasm"/>
    <property type="evidence" value="ECO:0007669"/>
    <property type="project" value="TreeGrafter"/>
</dbReference>
<dbReference type="Gene3D" id="3.30.1200.10">
    <property type="entry name" value="YggU-like"/>
    <property type="match status" value="1"/>
</dbReference>
<dbReference type="HAMAP" id="MF_00634">
    <property type="entry name" value="UPF0235"/>
    <property type="match status" value="1"/>
</dbReference>
<dbReference type="InterPro" id="IPR003746">
    <property type="entry name" value="DUF167"/>
</dbReference>
<dbReference type="InterPro" id="IPR036591">
    <property type="entry name" value="YggU-like_sf"/>
</dbReference>
<dbReference type="NCBIfam" id="TIGR00251">
    <property type="entry name" value="DUF167 family protein"/>
    <property type="match status" value="1"/>
</dbReference>
<dbReference type="NCBIfam" id="NF003466">
    <property type="entry name" value="PRK05090.1"/>
    <property type="match status" value="1"/>
</dbReference>
<dbReference type="PANTHER" id="PTHR13420">
    <property type="entry name" value="UPF0235 PROTEIN C15ORF40"/>
    <property type="match status" value="1"/>
</dbReference>
<dbReference type="PANTHER" id="PTHR13420:SF7">
    <property type="entry name" value="UPF0235 PROTEIN C15ORF40"/>
    <property type="match status" value="1"/>
</dbReference>
<dbReference type="Pfam" id="PF02594">
    <property type="entry name" value="DUF167"/>
    <property type="match status" value="1"/>
</dbReference>
<dbReference type="SMART" id="SM01152">
    <property type="entry name" value="DUF167"/>
    <property type="match status" value="1"/>
</dbReference>
<dbReference type="SUPFAM" id="SSF69786">
    <property type="entry name" value="YggU-like"/>
    <property type="match status" value="1"/>
</dbReference>
<proteinExistence type="inferred from homology"/>
<feature type="chain" id="PRO_1000056794" description="UPF0235 protein Sputw3181_1321">
    <location>
        <begin position="1"/>
        <end position="96"/>
    </location>
</feature>
<reference key="1">
    <citation type="submission" date="2006-12" db="EMBL/GenBank/DDBJ databases">
        <title>Complete sequence of Shewanella sp. W3-18-1.</title>
        <authorList>
            <consortium name="US DOE Joint Genome Institute"/>
            <person name="Copeland A."/>
            <person name="Lucas S."/>
            <person name="Lapidus A."/>
            <person name="Barry K."/>
            <person name="Detter J.C."/>
            <person name="Glavina del Rio T."/>
            <person name="Hammon N."/>
            <person name="Israni S."/>
            <person name="Dalin E."/>
            <person name="Tice H."/>
            <person name="Pitluck S."/>
            <person name="Chain P."/>
            <person name="Malfatti S."/>
            <person name="Shin M."/>
            <person name="Vergez L."/>
            <person name="Schmutz J."/>
            <person name="Larimer F."/>
            <person name="Land M."/>
            <person name="Hauser L."/>
            <person name="Kyrpides N."/>
            <person name="Lykidis A."/>
            <person name="Tiedje J."/>
            <person name="Richardson P."/>
        </authorList>
    </citation>
    <scope>NUCLEOTIDE SEQUENCE [LARGE SCALE GENOMIC DNA]</scope>
    <source>
        <strain>W3-18-1</strain>
    </source>
</reference>
<name>Y1321_SHESW</name>